<name>RPO6_PYRFU</name>
<dbReference type="EC" id="2.7.7.6" evidence="1"/>
<dbReference type="EMBL" id="AE009950">
    <property type="protein sequence ID" value="AAL81766.1"/>
    <property type="molecule type" value="Genomic_DNA"/>
</dbReference>
<dbReference type="RefSeq" id="WP_011012789.1">
    <property type="nucleotide sequence ID" value="NZ_CP023154.1"/>
</dbReference>
<dbReference type="PDB" id="8CRO">
    <property type="method" value="EM"/>
    <property type="resolution" value="3.10 A"/>
    <property type="chains" value="K=1-57"/>
</dbReference>
<dbReference type="PDB" id="8OKI">
    <property type="method" value="EM"/>
    <property type="resolution" value="3.45 A"/>
    <property type="chains" value="K=1-57"/>
</dbReference>
<dbReference type="PDB" id="8ORQ">
    <property type="method" value="EM"/>
    <property type="resolution" value="3.20 A"/>
    <property type="chains" value="K=1-57"/>
</dbReference>
<dbReference type="PDB" id="8P2I">
    <property type="method" value="EM"/>
    <property type="resolution" value="3.40 A"/>
    <property type="chains" value="K=1-57"/>
</dbReference>
<dbReference type="PDB" id="8RBO">
    <property type="method" value="EM"/>
    <property type="resolution" value="3.02 A"/>
    <property type="chains" value="K=1-57"/>
</dbReference>
<dbReference type="PDBsum" id="8CRO"/>
<dbReference type="PDBsum" id="8OKI"/>
<dbReference type="PDBsum" id="8ORQ"/>
<dbReference type="PDBsum" id="8P2I"/>
<dbReference type="PDBsum" id="8RBO"/>
<dbReference type="EMDB" id="EMD-16809"/>
<dbReference type="EMDB" id="EMD-16929"/>
<dbReference type="EMDB" id="EMD-17130"/>
<dbReference type="EMDB" id="EMD-17366"/>
<dbReference type="EMDB" id="EMD-19033"/>
<dbReference type="SMR" id="Q8U0E8"/>
<dbReference type="IntAct" id="Q8U0E8">
    <property type="interactions" value="1"/>
</dbReference>
<dbReference type="MINT" id="Q8U0E8"/>
<dbReference type="STRING" id="186497.PF1642"/>
<dbReference type="PaxDb" id="186497-PF1642"/>
<dbReference type="KEGG" id="pfu:PF1642"/>
<dbReference type="PATRIC" id="fig|186497.12.peg.1708"/>
<dbReference type="eggNOG" id="arCOG01268">
    <property type="taxonomic scope" value="Archaea"/>
</dbReference>
<dbReference type="HOGENOM" id="CLU_112527_5_0_2"/>
<dbReference type="OrthoDB" id="10567at2157"/>
<dbReference type="PhylomeDB" id="Q8U0E8"/>
<dbReference type="Proteomes" id="UP000001013">
    <property type="component" value="Chromosome"/>
</dbReference>
<dbReference type="GO" id="GO:0005737">
    <property type="term" value="C:cytoplasm"/>
    <property type="evidence" value="ECO:0007669"/>
    <property type="project" value="UniProtKB-SubCell"/>
</dbReference>
<dbReference type="GO" id="GO:0000428">
    <property type="term" value="C:DNA-directed RNA polymerase complex"/>
    <property type="evidence" value="ECO:0007669"/>
    <property type="project" value="UniProtKB-KW"/>
</dbReference>
<dbReference type="GO" id="GO:0003677">
    <property type="term" value="F:DNA binding"/>
    <property type="evidence" value="ECO:0007669"/>
    <property type="project" value="UniProtKB-UniRule"/>
</dbReference>
<dbReference type="GO" id="GO:0003899">
    <property type="term" value="F:DNA-directed RNA polymerase activity"/>
    <property type="evidence" value="ECO:0007669"/>
    <property type="project" value="UniProtKB-UniRule"/>
</dbReference>
<dbReference type="GO" id="GO:0006360">
    <property type="term" value="P:transcription by RNA polymerase I"/>
    <property type="evidence" value="ECO:0007669"/>
    <property type="project" value="TreeGrafter"/>
</dbReference>
<dbReference type="GO" id="GO:0006366">
    <property type="term" value="P:transcription by RNA polymerase II"/>
    <property type="evidence" value="ECO:0007669"/>
    <property type="project" value="TreeGrafter"/>
</dbReference>
<dbReference type="GO" id="GO:0042797">
    <property type="term" value="P:tRNA transcription by RNA polymerase III"/>
    <property type="evidence" value="ECO:0007669"/>
    <property type="project" value="TreeGrafter"/>
</dbReference>
<dbReference type="Gene3D" id="3.90.940.10">
    <property type="match status" value="1"/>
</dbReference>
<dbReference type="HAMAP" id="MF_00192">
    <property type="entry name" value="RNApol_arch_Rpo6"/>
    <property type="match status" value="1"/>
</dbReference>
<dbReference type="InterPro" id="IPR020708">
    <property type="entry name" value="DNA-dir_RNA_polK_14-18kDa_CS"/>
</dbReference>
<dbReference type="InterPro" id="IPR006110">
    <property type="entry name" value="Pol_omega/Rpo6/RPB6"/>
</dbReference>
<dbReference type="InterPro" id="IPR036161">
    <property type="entry name" value="RPB6/omega-like_sf"/>
</dbReference>
<dbReference type="InterPro" id="IPR006111">
    <property type="entry name" value="Rpo6/Rpb6"/>
</dbReference>
<dbReference type="NCBIfam" id="NF002208">
    <property type="entry name" value="PRK01099.1-3"/>
    <property type="match status" value="1"/>
</dbReference>
<dbReference type="PANTHER" id="PTHR47227">
    <property type="entry name" value="DNA-DIRECTED RNA POLYMERASE SUBUNIT K"/>
    <property type="match status" value="1"/>
</dbReference>
<dbReference type="PANTHER" id="PTHR47227:SF5">
    <property type="entry name" value="DNA-DIRECTED RNA POLYMERASES I, II, AND III SUBUNIT RPABC2"/>
    <property type="match status" value="1"/>
</dbReference>
<dbReference type="Pfam" id="PF01192">
    <property type="entry name" value="RNA_pol_Rpb6"/>
    <property type="match status" value="1"/>
</dbReference>
<dbReference type="PIRSF" id="PIRSF000778">
    <property type="entry name" value="RpoK/RPB6"/>
    <property type="match status" value="1"/>
</dbReference>
<dbReference type="SUPFAM" id="SSF63562">
    <property type="entry name" value="RPB6/omega subunit-like"/>
    <property type="match status" value="1"/>
</dbReference>
<dbReference type="PROSITE" id="PS01111">
    <property type="entry name" value="RNA_POL_K_14KD"/>
    <property type="match status" value="1"/>
</dbReference>
<gene>
    <name evidence="1" type="primary">rpo6</name>
    <name evidence="1" type="synonym">rpoK</name>
    <name type="ordered locus">PF1642</name>
</gene>
<protein>
    <recommendedName>
        <fullName evidence="1">DNA-directed RNA polymerase subunit Rpo6</fullName>
        <ecNumber evidence="1">2.7.7.6</ecNumber>
    </recommendedName>
    <alternativeName>
        <fullName evidence="1">DNA-directed RNA polymerase subunit K</fullName>
    </alternativeName>
</protein>
<proteinExistence type="evidence at protein level"/>
<evidence type="ECO:0000255" key="1">
    <source>
        <dbReference type="HAMAP-Rule" id="MF_00192"/>
    </source>
</evidence>
<evidence type="ECO:0007829" key="2">
    <source>
        <dbReference type="PDB" id="8RBO"/>
    </source>
</evidence>
<reference key="1">
    <citation type="journal article" date="1999" name="Genetics">
        <title>Divergence of the hyperthermophilic archaea Pyrococcus furiosus and P. horikoshii inferred from complete genomic sequences.</title>
        <authorList>
            <person name="Maeder D.L."/>
            <person name="Weiss R.B."/>
            <person name="Dunn D.M."/>
            <person name="Cherry J.L."/>
            <person name="Gonzalez J.M."/>
            <person name="DiRuggiero J."/>
            <person name="Robb F.T."/>
        </authorList>
    </citation>
    <scope>NUCLEOTIDE SEQUENCE [LARGE SCALE GENOMIC DNA]</scope>
    <source>
        <strain>ATCC 43587 / DSM 3638 / JCM 8422 / Vc1</strain>
    </source>
</reference>
<feature type="chain" id="PRO_0000133819" description="DNA-directed RNA polymerase subunit Rpo6">
    <location>
        <begin position="1"/>
        <end position="57"/>
    </location>
</feature>
<feature type="helix" evidence="2">
    <location>
        <begin position="6"/>
        <end position="22"/>
    </location>
</feature>
<feature type="helix" evidence="2">
    <location>
        <begin position="36"/>
        <end position="46"/>
    </location>
</feature>
<feature type="strand" evidence="2">
    <location>
        <begin position="51"/>
        <end position="54"/>
    </location>
</feature>
<accession>Q8U0E8</accession>
<organism>
    <name type="scientific">Pyrococcus furiosus (strain ATCC 43587 / DSM 3638 / JCM 8422 / Vc1)</name>
    <dbReference type="NCBI Taxonomy" id="186497"/>
    <lineage>
        <taxon>Archaea</taxon>
        <taxon>Methanobacteriati</taxon>
        <taxon>Methanobacteriota</taxon>
        <taxon>Thermococci</taxon>
        <taxon>Thermococcales</taxon>
        <taxon>Thermococcaceae</taxon>
        <taxon>Pyrococcus</taxon>
    </lineage>
</organism>
<keyword id="KW-0002">3D-structure</keyword>
<keyword id="KW-0963">Cytoplasm</keyword>
<keyword id="KW-0240">DNA-directed RNA polymerase</keyword>
<keyword id="KW-0548">Nucleotidyltransferase</keyword>
<keyword id="KW-1185">Reference proteome</keyword>
<keyword id="KW-0804">Transcription</keyword>
<keyword id="KW-0808">Transferase</keyword>
<comment type="function">
    <text evidence="1">DNA-dependent RNA polymerase (RNAP) catalyzes the transcription of DNA into RNA using the four ribonucleoside triphosphates as substrates.</text>
</comment>
<comment type="catalytic activity">
    <reaction evidence="1">
        <text>RNA(n) + a ribonucleoside 5'-triphosphate = RNA(n+1) + diphosphate</text>
        <dbReference type="Rhea" id="RHEA:21248"/>
        <dbReference type="Rhea" id="RHEA-COMP:14527"/>
        <dbReference type="Rhea" id="RHEA-COMP:17342"/>
        <dbReference type="ChEBI" id="CHEBI:33019"/>
        <dbReference type="ChEBI" id="CHEBI:61557"/>
        <dbReference type="ChEBI" id="CHEBI:140395"/>
        <dbReference type="EC" id="2.7.7.6"/>
    </reaction>
</comment>
<comment type="subunit">
    <text evidence="1">Part of the RNA polymerase complex.</text>
</comment>
<comment type="subcellular location">
    <subcellularLocation>
        <location evidence="1">Cytoplasm</location>
    </subcellularLocation>
</comment>
<comment type="similarity">
    <text evidence="1">Belongs to the archaeal Rpo6/eukaryotic RPB6 RNA polymerase subunit family.</text>
</comment>
<sequence>MFKYTRFEKARIIGARALQISMGAPVLIDVPPGITPLEAAILEFEKGVIPITVIRPS</sequence>